<reference key="1">
    <citation type="journal article" date="1996" name="Science">
        <title>Complete genome sequence of the methanogenic archaeon, Methanococcus jannaschii.</title>
        <authorList>
            <person name="Bult C.J."/>
            <person name="White O."/>
            <person name="Olsen G.J."/>
            <person name="Zhou L."/>
            <person name="Fleischmann R.D."/>
            <person name="Sutton G.G."/>
            <person name="Blake J.A."/>
            <person name="FitzGerald L.M."/>
            <person name="Clayton R.A."/>
            <person name="Gocayne J.D."/>
            <person name="Kerlavage A.R."/>
            <person name="Dougherty B.A."/>
            <person name="Tomb J.-F."/>
            <person name="Adams M.D."/>
            <person name="Reich C.I."/>
            <person name="Overbeek R."/>
            <person name="Kirkness E.F."/>
            <person name="Weinstock K.G."/>
            <person name="Merrick J.M."/>
            <person name="Glodek A."/>
            <person name="Scott J.L."/>
            <person name="Geoghagen N.S.M."/>
            <person name="Weidman J.F."/>
            <person name="Fuhrmann J.L."/>
            <person name="Nguyen D."/>
            <person name="Utterback T.R."/>
            <person name="Kelley J.M."/>
            <person name="Peterson J.D."/>
            <person name="Sadow P.W."/>
            <person name="Hanna M.C."/>
            <person name="Cotton M.D."/>
            <person name="Roberts K.M."/>
            <person name="Hurst M.A."/>
            <person name="Kaine B.P."/>
            <person name="Borodovsky M."/>
            <person name="Klenk H.-P."/>
            <person name="Fraser C.M."/>
            <person name="Smith H.O."/>
            <person name="Woese C.R."/>
            <person name="Venter J.C."/>
        </authorList>
    </citation>
    <scope>NUCLEOTIDE SEQUENCE [LARGE SCALE GENOMIC DNA]</scope>
    <source>
        <strain>ATCC 43067 / DSM 2661 / JAL-1 / JCM 10045 / NBRC 100440</strain>
    </source>
</reference>
<protein>
    <recommendedName>
        <fullName>Uncharacterized protein MJ1058</fullName>
    </recommendedName>
</protein>
<keyword id="KW-1185">Reference proteome</keyword>
<keyword id="KW-0808">Transferase</keyword>
<sequence length="609" mass="71733">MVKILGVKYFLHDSGVFYIDTKNKEIFGILTERVTRIKHDGGTVIPILNEYPKLKNIDYVAYPFEQTNLDFILFKHIDDYIKRTYKPKYIKEYAKYKKELSQNKTKFVLNNIYRPFIWEILAVYGLRKLLFKRFNNIYNKLGNLAIKRELKKIFRKDVSLYEHHLCHAASAYYFSPFFPKETLVFTLDGIGDWKYHSLWLFKEYDYRLVSYSSFDIICYDDVEGIFKGASIGHIYSLFTEILGFTPNSDEGKTEALAAYGKPNGELYNLLKKGYKINKEKLRWEHDINILKKLHNKQYLQKWKEKIGDENFAATIQRWLEDTVVEYLNIVYEKFKIQRLAMAGGVVANVIMNLNIFERTPFEELYIFPAMGDDGVAAGAAILKAVELGEDISWLKDLEMPYWGPNYSREDVEKELKKDKWKDKITYEYIGEKWPEIAAEMIAKGNIIAVYQGKMEFGPRALGNRSILADPRDPKTRDKINSTVKRRPWFQPFCPSVLEEERERLFEKSYKHKHMAIAFRMKKEFWDKLPSAMHIDGTARPQFVEEKDNPNYYRLLKKFKEITGYGIVINTSFNLHGRTIVRTPEDAITDFIDCNIDAMFIEGYLVKRKI</sequence>
<accession>Q58458</accession>
<comment type="similarity">
    <text evidence="1">Belongs to the NodU/CmcH family.</text>
</comment>
<gene>
    <name type="ordered locus">MJ1058</name>
</gene>
<feature type="chain" id="PRO_0000207858" description="Uncharacterized protein MJ1058">
    <location>
        <begin position="1"/>
        <end position="609"/>
    </location>
</feature>
<proteinExistence type="inferred from homology"/>
<evidence type="ECO:0000305" key="1"/>
<organism>
    <name type="scientific">Methanocaldococcus jannaschii (strain ATCC 43067 / DSM 2661 / JAL-1 / JCM 10045 / NBRC 100440)</name>
    <name type="common">Methanococcus jannaschii</name>
    <dbReference type="NCBI Taxonomy" id="243232"/>
    <lineage>
        <taxon>Archaea</taxon>
        <taxon>Methanobacteriati</taxon>
        <taxon>Methanobacteriota</taxon>
        <taxon>Methanomada group</taxon>
        <taxon>Methanococci</taxon>
        <taxon>Methanococcales</taxon>
        <taxon>Methanocaldococcaceae</taxon>
        <taxon>Methanocaldococcus</taxon>
    </lineage>
</organism>
<dbReference type="EMBL" id="L77117">
    <property type="protein sequence ID" value="AAB99062.1"/>
    <property type="molecule type" value="Genomic_DNA"/>
</dbReference>
<dbReference type="PIR" id="A64432">
    <property type="entry name" value="A64432"/>
</dbReference>
<dbReference type="RefSeq" id="WP_010870571.1">
    <property type="nucleotide sequence ID" value="NC_000909.1"/>
</dbReference>
<dbReference type="SMR" id="Q58458"/>
<dbReference type="STRING" id="243232.MJ_1058"/>
<dbReference type="PaxDb" id="243232-MJ_1058"/>
<dbReference type="EnsemblBacteria" id="AAB99062">
    <property type="protein sequence ID" value="AAB99062"/>
    <property type="gene ID" value="MJ_1058"/>
</dbReference>
<dbReference type="GeneID" id="1451955"/>
<dbReference type="KEGG" id="mja:MJ_1058"/>
<dbReference type="eggNOG" id="arCOG01188">
    <property type="taxonomic scope" value="Archaea"/>
</dbReference>
<dbReference type="HOGENOM" id="CLU_014411_2_0_2"/>
<dbReference type="InParanoid" id="Q58458"/>
<dbReference type="OrthoDB" id="42122at2157"/>
<dbReference type="PhylomeDB" id="Q58458"/>
<dbReference type="Proteomes" id="UP000000805">
    <property type="component" value="Chromosome"/>
</dbReference>
<dbReference type="GO" id="GO:0016740">
    <property type="term" value="F:transferase activity"/>
    <property type="evidence" value="ECO:0007669"/>
    <property type="project" value="UniProtKB-KW"/>
</dbReference>
<dbReference type="GO" id="GO:0009058">
    <property type="term" value="P:biosynthetic process"/>
    <property type="evidence" value="ECO:0007669"/>
    <property type="project" value="InterPro"/>
</dbReference>
<dbReference type="CDD" id="cd24100">
    <property type="entry name" value="ASKHA_NBD_MJ1051-like_N"/>
    <property type="match status" value="1"/>
</dbReference>
<dbReference type="Gene3D" id="3.30.420.40">
    <property type="match status" value="2"/>
</dbReference>
<dbReference type="Gene3D" id="3.90.870.20">
    <property type="entry name" value="Carbamoyltransferase, C-terminal domain"/>
    <property type="match status" value="1"/>
</dbReference>
<dbReference type="InterPro" id="IPR043129">
    <property type="entry name" value="ATPase_NBD"/>
</dbReference>
<dbReference type="InterPro" id="IPR031730">
    <property type="entry name" value="Carbam_trans_C"/>
</dbReference>
<dbReference type="InterPro" id="IPR038152">
    <property type="entry name" value="Carbam_trans_C_sf"/>
</dbReference>
<dbReference type="InterPro" id="IPR003696">
    <property type="entry name" value="Carbtransf_dom"/>
</dbReference>
<dbReference type="InterPro" id="IPR051338">
    <property type="entry name" value="NodU/CmcH_Carbamoyltrnsfr"/>
</dbReference>
<dbReference type="PANTHER" id="PTHR34847">
    <property type="entry name" value="NODULATION PROTEIN U"/>
    <property type="match status" value="1"/>
</dbReference>
<dbReference type="PANTHER" id="PTHR34847:SF1">
    <property type="entry name" value="NODULATION PROTEIN U"/>
    <property type="match status" value="1"/>
</dbReference>
<dbReference type="Pfam" id="PF16861">
    <property type="entry name" value="Carbam_trans_C"/>
    <property type="match status" value="1"/>
</dbReference>
<dbReference type="Pfam" id="PF02543">
    <property type="entry name" value="Carbam_trans_N"/>
    <property type="match status" value="1"/>
</dbReference>
<dbReference type="SUPFAM" id="SSF53067">
    <property type="entry name" value="Actin-like ATPase domain"/>
    <property type="match status" value="1"/>
</dbReference>
<name>Y1058_METJA</name>